<feature type="chain" id="PRO_1000085652" description="Bifunctional protein PyrR">
    <location>
        <begin position="1"/>
        <end position="177"/>
    </location>
</feature>
<feature type="short sequence motif" description="PRPP-binding" evidence="1">
    <location>
        <begin position="99"/>
        <end position="111"/>
    </location>
</feature>
<gene>
    <name evidence="1" type="primary">pyrR</name>
    <name type="ordered locus">MAE_45940</name>
</gene>
<reference key="1">
    <citation type="journal article" date="2007" name="DNA Res.">
        <title>Complete genomic structure of the bloom-forming toxic cyanobacterium Microcystis aeruginosa NIES-843.</title>
        <authorList>
            <person name="Kaneko T."/>
            <person name="Nakajima N."/>
            <person name="Okamoto S."/>
            <person name="Suzuki I."/>
            <person name="Tanabe Y."/>
            <person name="Tamaoki M."/>
            <person name="Nakamura Y."/>
            <person name="Kasai F."/>
            <person name="Watanabe A."/>
            <person name="Kawashima K."/>
            <person name="Kishida Y."/>
            <person name="Ono A."/>
            <person name="Shimizu Y."/>
            <person name="Takahashi C."/>
            <person name="Minami C."/>
            <person name="Fujishiro T."/>
            <person name="Kohara M."/>
            <person name="Katoh M."/>
            <person name="Nakazaki N."/>
            <person name="Nakayama S."/>
            <person name="Yamada M."/>
            <person name="Tabata S."/>
            <person name="Watanabe M.M."/>
        </authorList>
    </citation>
    <scope>NUCLEOTIDE SEQUENCE [LARGE SCALE GENOMIC DNA]</scope>
    <source>
        <strain>NIES-843 / IAM M-247</strain>
    </source>
</reference>
<organism>
    <name type="scientific">Microcystis aeruginosa (strain NIES-843 / IAM M-2473)</name>
    <dbReference type="NCBI Taxonomy" id="449447"/>
    <lineage>
        <taxon>Bacteria</taxon>
        <taxon>Bacillati</taxon>
        <taxon>Cyanobacteriota</taxon>
        <taxon>Cyanophyceae</taxon>
        <taxon>Oscillatoriophycideae</taxon>
        <taxon>Chroococcales</taxon>
        <taxon>Microcystaceae</taxon>
        <taxon>Microcystis</taxon>
    </lineage>
</organism>
<accession>B0JUG8</accession>
<proteinExistence type="inferred from homology"/>
<sequence length="177" mass="19769">MTPQLIEILSADEIRRTITRLASEVIEKSGDLNNLILIGIYTRGVPLANLIASQIESLEGVKVPVGAIDITFYRDDLDRIKTRTPAKTKMPLDVTGKTVILVDDVIYKGRTIRAAFNAIIEYGRPQKIRLLVLVDRGHRELPIHPDFTGKKLPTAAEEQVKVYLQEIDGKDGVELIK</sequence>
<dbReference type="EC" id="2.4.2.9" evidence="1"/>
<dbReference type="EMBL" id="AP009552">
    <property type="protein sequence ID" value="BAG04416.1"/>
    <property type="molecule type" value="Genomic_DNA"/>
</dbReference>
<dbReference type="RefSeq" id="WP_004162618.1">
    <property type="nucleotide sequence ID" value="NC_010296.1"/>
</dbReference>
<dbReference type="SMR" id="B0JUG8"/>
<dbReference type="STRING" id="449447.MAE_45940"/>
<dbReference type="PaxDb" id="449447-MAE_45940"/>
<dbReference type="EnsemblBacteria" id="BAG04416">
    <property type="protein sequence ID" value="BAG04416"/>
    <property type="gene ID" value="MAE_45940"/>
</dbReference>
<dbReference type="KEGG" id="mar:MAE_45940"/>
<dbReference type="eggNOG" id="COG2065">
    <property type="taxonomic scope" value="Bacteria"/>
</dbReference>
<dbReference type="HOGENOM" id="CLU_094234_2_1_3"/>
<dbReference type="BioCyc" id="MAER449447:MAE_RS19925-MONOMER"/>
<dbReference type="Proteomes" id="UP000001510">
    <property type="component" value="Chromosome"/>
</dbReference>
<dbReference type="GO" id="GO:0004845">
    <property type="term" value="F:uracil phosphoribosyltransferase activity"/>
    <property type="evidence" value="ECO:0007669"/>
    <property type="project" value="UniProtKB-UniRule"/>
</dbReference>
<dbReference type="GO" id="GO:0006355">
    <property type="term" value="P:regulation of DNA-templated transcription"/>
    <property type="evidence" value="ECO:0007669"/>
    <property type="project" value="UniProtKB-UniRule"/>
</dbReference>
<dbReference type="CDD" id="cd06223">
    <property type="entry name" value="PRTases_typeI"/>
    <property type="match status" value="1"/>
</dbReference>
<dbReference type="FunFam" id="3.40.50.2020:FF:000020">
    <property type="entry name" value="Bifunctional protein PyrR"/>
    <property type="match status" value="1"/>
</dbReference>
<dbReference type="Gene3D" id="3.40.50.2020">
    <property type="match status" value="1"/>
</dbReference>
<dbReference type="HAMAP" id="MF_01219">
    <property type="entry name" value="PyrR"/>
    <property type="match status" value="1"/>
</dbReference>
<dbReference type="InterPro" id="IPR000836">
    <property type="entry name" value="PRibTrfase_dom"/>
</dbReference>
<dbReference type="InterPro" id="IPR029057">
    <property type="entry name" value="PRTase-like"/>
</dbReference>
<dbReference type="InterPro" id="IPR023050">
    <property type="entry name" value="PyrR"/>
</dbReference>
<dbReference type="InterPro" id="IPR050137">
    <property type="entry name" value="PyrR_bifunctional"/>
</dbReference>
<dbReference type="NCBIfam" id="NF003549">
    <property type="entry name" value="PRK05205.1-5"/>
    <property type="match status" value="1"/>
</dbReference>
<dbReference type="PANTHER" id="PTHR11608">
    <property type="entry name" value="BIFUNCTIONAL PROTEIN PYRR"/>
    <property type="match status" value="1"/>
</dbReference>
<dbReference type="PANTHER" id="PTHR11608:SF0">
    <property type="entry name" value="BIFUNCTIONAL PROTEIN PYRR"/>
    <property type="match status" value="1"/>
</dbReference>
<dbReference type="Pfam" id="PF00156">
    <property type="entry name" value="Pribosyltran"/>
    <property type="match status" value="1"/>
</dbReference>
<dbReference type="SUPFAM" id="SSF53271">
    <property type="entry name" value="PRTase-like"/>
    <property type="match status" value="1"/>
</dbReference>
<evidence type="ECO:0000255" key="1">
    <source>
        <dbReference type="HAMAP-Rule" id="MF_01219"/>
    </source>
</evidence>
<comment type="function">
    <text evidence="1">Regulates the transcription of the pyrimidine nucleotide (pyr) operon in response to exogenous pyrimidines.</text>
</comment>
<comment type="function">
    <text evidence="1">Also displays a weak uracil phosphoribosyltransferase activity which is not physiologically significant.</text>
</comment>
<comment type="catalytic activity">
    <reaction evidence="1">
        <text>UMP + diphosphate = 5-phospho-alpha-D-ribose 1-diphosphate + uracil</text>
        <dbReference type="Rhea" id="RHEA:13017"/>
        <dbReference type="ChEBI" id="CHEBI:17568"/>
        <dbReference type="ChEBI" id="CHEBI:33019"/>
        <dbReference type="ChEBI" id="CHEBI:57865"/>
        <dbReference type="ChEBI" id="CHEBI:58017"/>
        <dbReference type="EC" id="2.4.2.9"/>
    </reaction>
</comment>
<comment type="similarity">
    <text evidence="1">Belongs to the purine/pyrimidine phosphoribosyltransferase family. PyrR subfamily.</text>
</comment>
<keyword id="KW-0328">Glycosyltransferase</keyword>
<keyword id="KW-0804">Transcription</keyword>
<keyword id="KW-0805">Transcription regulation</keyword>
<keyword id="KW-0808">Transferase</keyword>
<protein>
    <recommendedName>
        <fullName evidence="1">Bifunctional protein PyrR</fullName>
    </recommendedName>
    <domain>
        <recommendedName>
            <fullName evidence="1">Pyrimidine operon regulatory protein</fullName>
        </recommendedName>
    </domain>
    <domain>
        <recommendedName>
            <fullName evidence="1">Uracil phosphoribosyltransferase</fullName>
            <shortName evidence="1">UPRTase</shortName>
            <ecNumber evidence="1">2.4.2.9</ecNumber>
        </recommendedName>
    </domain>
</protein>
<name>PYRR_MICAN</name>